<proteinExistence type="inferred from homology"/>
<accession>Q6AMR4</accession>
<feature type="chain" id="PRO_0000272985" description="Flagellar assembly factor FliW 1">
    <location>
        <begin position="1"/>
        <end position="141"/>
    </location>
</feature>
<reference key="1">
    <citation type="journal article" date="2004" name="Environ. Microbiol.">
        <title>The genome of Desulfotalea psychrophila, a sulfate-reducing bacterium from permanently cold Arctic sediments.</title>
        <authorList>
            <person name="Rabus R."/>
            <person name="Ruepp A."/>
            <person name="Frickey T."/>
            <person name="Rattei T."/>
            <person name="Fartmann B."/>
            <person name="Stark M."/>
            <person name="Bauer M."/>
            <person name="Zibat A."/>
            <person name="Lombardot T."/>
            <person name="Becker I."/>
            <person name="Amann J."/>
            <person name="Gellner K."/>
            <person name="Teeling H."/>
            <person name="Leuschner W.D."/>
            <person name="Gloeckner F.-O."/>
            <person name="Lupas A.N."/>
            <person name="Amann R."/>
            <person name="Klenk H.-P."/>
        </authorList>
    </citation>
    <scope>NUCLEOTIDE SEQUENCE [LARGE SCALE GENOMIC DNA]</scope>
    <source>
        <strain>DSM 12343 / LSv54</strain>
    </source>
</reference>
<gene>
    <name evidence="1" type="primary">fliW1</name>
    <name type="ordered locus">DP1632</name>
</gene>
<evidence type="ECO:0000255" key="1">
    <source>
        <dbReference type="HAMAP-Rule" id="MF_01185"/>
    </source>
</evidence>
<name>FLIW1_DESPS</name>
<keyword id="KW-1005">Bacterial flagellum biogenesis</keyword>
<keyword id="KW-0143">Chaperone</keyword>
<keyword id="KW-0963">Cytoplasm</keyword>
<keyword id="KW-1185">Reference proteome</keyword>
<keyword id="KW-0810">Translation regulation</keyword>
<organism>
    <name type="scientific">Desulfotalea psychrophila (strain LSv54 / DSM 12343)</name>
    <dbReference type="NCBI Taxonomy" id="177439"/>
    <lineage>
        <taxon>Bacteria</taxon>
        <taxon>Pseudomonadati</taxon>
        <taxon>Thermodesulfobacteriota</taxon>
        <taxon>Desulfobulbia</taxon>
        <taxon>Desulfobulbales</taxon>
        <taxon>Desulfocapsaceae</taxon>
        <taxon>Desulfotalea</taxon>
    </lineage>
</organism>
<comment type="function">
    <text evidence="1">Acts as an anti-CsrA protein, binds CsrA and prevents it from repressing translation of its target genes, one of which is flagellin. Binds to flagellin and participates in the assembly of the flagellum.</text>
</comment>
<comment type="subunit">
    <text evidence="1">Interacts with translational regulator CsrA and flagellin(s).</text>
</comment>
<comment type="subcellular location">
    <subcellularLocation>
        <location evidence="1">Cytoplasm</location>
    </subcellularLocation>
</comment>
<comment type="similarity">
    <text evidence="1">Belongs to the FliW family.</text>
</comment>
<protein>
    <recommendedName>
        <fullName evidence="1">Flagellar assembly factor FliW 1</fullName>
    </recommendedName>
</protein>
<sequence length="141" mass="15951">MTSVKERVAAPSVNFEKILFFPEGIPGFEDFKEYRIFHKETNGLAIYWLESCDDAAVTFTLVAPDHYGLHYDFNLSDEEQTLLQAEEPMQLAIFLIVSKGEGQYAGLNANISGPIVINVQRQRALQKVLQQSRVLTTIIDQ</sequence>
<dbReference type="EMBL" id="CR522870">
    <property type="protein sequence ID" value="CAG36361.1"/>
    <property type="molecule type" value="Genomic_DNA"/>
</dbReference>
<dbReference type="RefSeq" id="WP_011188873.1">
    <property type="nucleotide sequence ID" value="NC_006138.1"/>
</dbReference>
<dbReference type="SMR" id="Q6AMR4"/>
<dbReference type="STRING" id="177439.DP1632"/>
<dbReference type="KEGG" id="dps:DP1632"/>
<dbReference type="eggNOG" id="COG1699">
    <property type="taxonomic scope" value="Bacteria"/>
</dbReference>
<dbReference type="HOGENOM" id="CLU_112356_0_1_7"/>
<dbReference type="OrthoDB" id="9801235at2"/>
<dbReference type="Proteomes" id="UP000000602">
    <property type="component" value="Chromosome"/>
</dbReference>
<dbReference type="GO" id="GO:0005737">
    <property type="term" value="C:cytoplasm"/>
    <property type="evidence" value="ECO:0007669"/>
    <property type="project" value="UniProtKB-SubCell"/>
</dbReference>
<dbReference type="GO" id="GO:0044780">
    <property type="term" value="P:bacterial-type flagellum assembly"/>
    <property type="evidence" value="ECO:0007669"/>
    <property type="project" value="UniProtKB-UniRule"/>
</dbReference>
<dbReference type="GO" id="GO:0006417">
    <property type="term" value="P:regulation of translation"/>
    <property type="evidence" value="ECO:0007669"/>
    <property type="project" value="UniProtKB-KW"/>
</dbReference>
<dbReference type="Gene3D" id="2.30.290.10">
    <property type="entry name" value="BH3618-like"/>
    <property type="match status" value="1"/>
</dbReference>
<dbReference type="HAMAP" id="MF_01185">
    <property type="entry name" value="FliW"/>
    <property type="match status" value="1"/>
</dbReference>
<dbReference type="InterPro" id="IPR003775">
    <property type="entry name" value="Flagellar_assembly_factor_FliW"/>
</dbReference>
<dbReference type="InterPro" id="IPR024046">
    <property type="entry name" value="Flagellar_assmbl_FliW_dom_sf"/>
</dbReference>
<dbReference type="PANTHER" id="PTHR39190">
    <property type="entry name" value="FLAGELLAR ASSEMBLY FACTOR FLIW"/>
    <property type="match status" value="1"/>
</dbReference>
<dbReference type="PANTHER" id="PTHR39190:SF1">
    <property type="entry name" value="FLAGELLAR ASSEMBLY FACTOR FLIW"/>
    <property type="match status" value="1"/>
</dbReference>
<dbReference type="Pfam" id="PF02623">
    <property type="entry name" value="FliW"/>
    <property type="match status" value="1"/>
</dbReference>
<dbReference type="SUPFAM" id="SSF141457">
    <property type="entry name" value="BH3618-like"/>
    <property type="match status" value="1"/>
</dbReference>